<organism>
    <name type="scientific">Saccharomyces cerevisiae (strain ATCC 204508 / S288c)</name>
    <name type="common">Baker's yeast</name>
    <dbReference type="NCBI Taxonomy" id="559292"/>
    <lineage>
        <taxon>Eukaryota</taxon>
        <taxon>Fungi</taxon>
        <taxon>Dikarya</taxon>
        <taxon>Ascomycota</taxon>
        <taxon>Saccharomycotina</taxon>
        <taxon>Saccharomycetes</taxon>
        <taxon>Saccharomycetales</taxon>
        <taxon>Saccharomycetaceae</taxon>
        <taxon>Saccharomyces</taxon>
    </lineage>
</organism>
<accession>P53208</accession>
<accession>D6VUF1</accession>
<name>EAT1_YEAST</name>
<keyword id="KW-0378">Hydrolase</keyword>
<keyword id="KW-0496">Mitochondrion</keyword>
<keyword id="KW-1185">Reference proteome</keyword>
<keyword id="KW-0808">Transferase</keyword>
<proteinExistence type="evidence at protein level"/>
<sequence>MSRLAHNKALPYKIIVDLSFHRTRLPSDVSSLIKFEQRPAIINIHGLLGSHVMFHSLNKLLSRKLDADIFSVDVRNHGISPKAIPYDYTTLTNDLIYFIETHIGLERPIYLLGFSMGGKIALLTTLYKNINIRKCISIDLPPYETPELDPMILQNYDLIMRIIRRDVKILRGSPSWQKKVLELFKSLECNKRKCGGAVALYFANGFLSVKSNNVHQAQLHYEQQQHDPYINYSMPLSSMPNLLDEVKKWPDLSNQRDFFQKGTASRKVLFMKGLQSNFINNDYSLLRYNFPCADVREFNTGHNLLLENPEDSFKCILNFFAEETLDFE</sequence>
<comment type="function">
    <text evidence="1 4">Alcohol acetyltransferase that catalyzes the synthesis of ethyl acetate from ethanol and acetyl-CoA (PubMed:28356220). Can also function as a thioesterase by hydrolyzing acetyl-CoA in the absence of ethanol, as well as esterase hydrolyzing ethyl acetate (By similarity).</text>
</comment>
<comment type="catalytic activity">
    <reaction evidence="4">
        <text>ethanol + acetyl-CoA = ethyl acetate + CoA</text>
        <dbReference type="Rhea" id="RHEA:55972"/>
        <dbReference type="ChEBI" id="CHEBI:16236"/>
        <dbReference type="ChEBI" id="CHEBI:27750"/>
        <dbReference type="ChEBI" id="CHEBI:57287"/>
        <dbReference type="ChEBI" id="CHEBI:57288"/>
        <dbReference type="EC" id="2.3.1.268"/>
    </reaction>
</comment>
<comment type="catalytic activity">
    <reaction evidence="1">
        <text>acetyl-CoA + H2O = acetate + CoA + H(+)</text>
        <dbReference type="Rhea" id="RHEA:20289"/>
        <dbReference type="ChEBI" id="CHEBI:15377"/>
        <dbReference type="ChEBI" id="CHEBI:15378"/>
        <dbReference type="ChEBI" id="CHEBI:30089"/>
        <dbReference type="ChEBI" id="CHEBI:57287"/>
        <dbReference type="ChEBI" id="CHEBI:57288"/>
        <dbReference type="EC" id="3.1.2.1"/>
    </reaction>
</comment>
<comment type="catalytic activity">
    <reaction evidence="1">
        <text>ethyl acetate + H2O = ethanol + acetate + H(+)</text>
        <dbReference type="Rhea" id="RHEA:58148"/>
        <dbReference type="ChEBI" id="CHEBI:15377"/>
        <dbReference type="ChEBI" id="CHEBI:15378"/>
        <dbReference type="ChEBI" id="CHEBI:16236"/>
        <dbReference type="ChEBI" id="CHEBI:27750"/>
        <dbReference type="ChEBI" id="CHEBI:30089"/>
    </reaction>
</comment>
<comment type="subcellular location">
    <subcellularLocation>
        <location evidence="3">Mitochondrion</location>
    </subcellularLocation>
</comment>
<comment type="disruption phenotype">
    <text evidence="4">Reduces ethyl acetate production by at least 50%.</text>
</comment>
<comment type="biotechnology">
    <text evidence="7">S.cerevisiae produces only trace amounts of ethyl acetate. These traces help S.cerevisiae disseminate in the environment by attracting fruit flies. However, as ethyl acetate is a key flavor compound and the most abundant ester in wine and beer, ethyl acetate-producting genes such as ethanol acetyltransferase are relevant for the fermented foods and beverages industry.</text>
</comment>
<comment type="similarity">
    <text evidence="6">Belongs to the AB hydrolase superfamily.</text>
</comment>
<dbReference type="EC" id="2.3.1.268" evidence="4"/>
<dbReference type="EC" id="3.1.2.1"/>
<dbReference type="EC" id="3.1.1.-"/>
<dbReference type="EMBL" id="Z72800">
    <property type="protein sequence ID" value="CAA96998.1"/>
    <property type="molecule type" value="Genomic_DNA"/>
</dbReference>
<dbReference type="EMBL" id="BK006941">
    <property type="protein sequence ID" value="DAA08112.1"/>
    <property type="molecule type" value="Genomic_DNA"/>
</dbReference>
<dbReference type="PIR" id="S64306">
    <property type="entry name" value="S64306"/>
</dbReference>
<dbReference type="RefSeq" id="NP_011529.1">
    <property type="nucleotide sequence ID" value="NM_001181144.1"/>
</dbReference>
<dbReference type="SMR" id="P53208"/>
<dbReference type="BioGRID" id="33258">
    <property type="interactions" value="23"/>
</dbReference>
<dbReference type="FunCoup" id="P53208">
    <property type="interactions" value="66"/>
</dbReference>
<dbReference type="IntAct" id="P53208">
    <property type="interactions" value="1"/>
</dbReference>
<dbReference type="MINT" id="P53208"/>
<dbReference type="STRING" id="4932.YGR015C"/>
<dbReference type="ESTHER" id="yeast-yg19">
    <property type="family name" value="ABHD11-Acetyl_transferase"/>
</dbReference>
<dbReference type="PaxDb" id="4932-YGR015C"/>
<dbReference type="PeptideAtlas" id="P53208"/>
<dbReference type="EnsemblFungi" id="YGR015C_mRNA">
    <property type="protein sequence ID" value="YGR015C"/>
    <property type="gene ID" value="YGR015C"/>
</dbReference>
<dbReference type="GeneID" id="852898"/>
<dbReference type="KEGG" id="sce:YGR015C"/>
<dbReference type="AGR" id="SGD:S000003247"/>
<dbReference type="SGD" id="S000003247">
    <property type="gene designation" value="EAT1"/>
</dbReference>
<dbReference type="VEuPathDB" id="FungiDB:YGR015C"/>
<dbReference type="eggNOG" id="KOG2382">
    <property type="taxonomic scope" value="Eukaryota"/>
</dbReference>
<dbReference type="HOGENOM" id="CLU_020336_53_0_1"/>
<dbReference type="InParanoid" id="P53208"/>
<dbReference type="OMA" id="KPYDYIT"/>
<dbReference type="OrthoDB" id="8119704at2759"/>
<dbReference type="BioCyc" id="YEAST:G3O-30742-MONOMER"/>
<dbReference type="BRENDA" id="2.3.1.268">
    <property type="organism ID" value="984"/>
</dbReference>
<dbReference type="BioGRID-ORCS" id="852898">
    <property type="hits" value="0 hits in 10 CRISPR screens"/>
</dbReference>
<dbReference type="PRO" id="PR:P53208"/>
<dbReference type="Proteomes" id="UP000002311">
    <property type="component" value="Chromosome VII"/>
</dbReference>
<dbReference type="RNAct" id="P53208">
    <property type="molecule type" value="protein"/>
</dbReference>
<dbReference type="GO" id="GO:0005739">
    <property type="term" value="C:mitochondrion"/>
    <property type="evidence" value="ECO:0007005"/>
    <property type="project" value="SGD"/>
</dbReference>
<dbReference type="GO" id="GO:0003986">
    <property type="term" value="F:acetyl-CoA hydrolase activity"/>
    <property type="evidence" value="ECO:0007669"/>
    <property type="project" value="UniProtKB-EC"/>
</dbReference>
<dbReference type="GO" id="GO:0016453">
    <property type="term" value="F:C-acetyltransferase activity"/>
    <property type="evidence" value="ECO:0000314"/>
    <property type="project" value="SGD"/>
</dbReference>
<dbReference type="GO" id="GO:0052689">
    <property type="term" value="F:carboxylic ester hydrolase activity"/>
    <property type="evidence" value="ECO:0000318"/>
    <property type="project" value="GO_Central"/>
</dbReference>
<dbReference type="GO" id="GO:0006629">
    <property type="term" value="P:lipid metabolic process"/>
    <property type="evidence" value="ECO:0000318"/>
    <property type="project" value="GO_Central"/>
</dbReference>
<dbReference type="FunFam" id="3.40.50.1820:FF:000423">
    <property type="entry name" value="YGR015C-like protein"/>
    <property type="match status" value="1"/>
</dbReference>
<dbReference type="Gene3D" id="3.40.50.1820">
    <property type="entry name" value="alpha/beta hydrolase"/>
    <property type="match status" value="1"/>
</dbReference>
<dbReference type="InterPro" id="IPR000073">
    <property type="entry name" value="AB_hydrolase_1"/>
</dbReference>
<dbReference type="InterPro" id="IPR029058">
    <property type="entry name" value="AB_hydrolase_fold"/>
</dbReference>
<dbReference type="PANTHER" id="PTHR46118">
    <property type="entry name" value="PROTEIN ABHD11"/>
    <property type="match status" value="1"/>
</dbReference>
<dbReference type="PANTHER" id="PTHR46118:SF4">
    <property type="entry name" value="PROTEIN ABHD11"/>
    <property type="match status" value="1"/>
</dbReference>
<dbReference type="Pfam" id="PF00561">
    <property type="entry name" value="Abhydrolase_1"/>
    <property type="match status" value="1"/>
</dbReference>
<dbReference type="SUPFAM" id="SSF53474">
    <property type="entry name" value="alpha/beta-Hydrolases"/>
    <property type="match status" value="1"/>
</dbReference>
<reference key="1">
    <citation type="journal article" date="1997" name="Yeast">
        <title>Sequence analysis of 203 kilobases from Saccharomyces cerevisiae chromosome VII.</title>
        <authorList>
            <person name="Rieger M."/>
            <person name="Brueckner M."/>
            <person name="Schaefer M."/>
            <person name="Mueller-Auer S."/>
        </authorList>
    </citation>
    <scope>NUCLEOTIDE SEQUENCE [GENOMIC DNA]</scope>
    <source>
        <strain>ATCC 204508 / S288c</strain>
    </source>
</reference>
<reference key="2">
    <citation type="journal article" date="1997" name="Nature">
        <title>The nucleotide sequence of Saccharomyces cerevisiae chromosome VII.</title>
        <authorList>
            <person name="Tettelin H."/>
            <person name="Agostoni-Carbone M.L."/>
            <person name="Albermann K."/>
            <person name="Albers M."/>
            <person name="Arroyo J."/>
            <person name="Backes U."/>
            <person name="Barreiros T."/>
            <person name="Bertani I."/>
            <person name="Bjourson A.J."/>
            <person name="Brueckner M."/>
            <person name="Bruschi C.V."/>
            <person name="Carignani G."/>
            <person name="Castagnoli L."/>
            <person name="Cerdan E."/>
            <person name="Clemente M.L."/>
            <person name="Coblenz A."/>
            <person name="Coglievina M."/>
            <person name="Coissac E."/>
            <person name="Defoor E."/>
            <person name="Del Bino S."/>
            <person name="Delius H."/>
            <person name="Delneri D."/>
            <person name="de Wergifosse P."/>
            <person name="Dujon B."/>
            <person name="Durand P."/>
            <person name="Entian K.-D."/>
            <person name="Eraso P."/>
            <person name="Escribano V."/>
            <person name="Fabiani L."/>
            <person name="Fartmann B."/>
            <person name="Feroli F."/>
            <person name="Feuermann M."/>
            <person name="Frontali L."/>
            <person name="Garcia-Gonzalez M."/>
            <person name="Garcia-Saez M.I."/>
            <person name="Goffeau A."/>
            <person name="Guerreiro P."/>
            <person name="Hani J."/>
            <person name="Hansen M."/>
            <person name="Hebling U."/>
            <person name="Hernandez K."/>
            <person name="Heumann K."/>
            <person name="Hilger F."/>
            <person name="Hofmann B."/>
            <person name="Indge K.J."/>
            <person name="James C.M."/>
            <person name="Klima R."/>
            <person name="Koetter P."/>
            <person name="Kramer B."/>
            <person name="Kramer W."/>
            <person name="Lauquin G."/>
            <person name="Leuther H."/>
            <person name="Louis E.J."/>
            <person name="Maillier E."/>
            <person name="Marconi A."/>
            <person name="Martegani E."/>
            <person name="Mazon M.J."/>
            <person name="Mazzoni C."/>
            <person name="McReynolds A.D.K."/>
            <person name="Melchioretto P."/>
            <person name="Mewes H.-W."/>
            <person name="Minenkova O."/>
            <person name="Mueller-Auer S."/>
            <person name="Nawrocki A."/>
            <person name="Netter P."/>
            <person name="Neu R."/>
            <person name="Nombela C."/>
            <person name="Oliver S.G."/>
            <person name="Panzeri L."/>
            <person name="Paoluzi S."/>
            <person name="Plevani P."/>
            <person name="Portetelle D."/>
            <person name="Portillo F."/>
            <person name="Potier S."/>
            <person name="Purnelle B."/>
            <person name="Rieger M."/>
            <person name="Riles L."/>
            <person name="Rinaldi T."/>
            <person name="Robben J."/>
            <person name="Rodrigues-Pousada C."/>
            <person name="Rodriguez-Belmonte E."/>
            <person name="Rodriguez-Torres A.M."/>
            <person name="Rose M."/>
            <person name="Ruzzi M."/>
            <person name="Saliola M."/>
            <person name="Sanchez-Perez M."/>
            <person name="Schaefer B."/>
            <person name="Schaefer M."/>
            <person name="Scharfe M."/>
            <person name="Schmidheini T."/>
            <person name="Schreer A."/>
            <person name="Skala J."/>
            <person name="Souciet J.-L."/>
            <person name="Steensma H.Y."/>
            <person name="Talla E."/>
            <person name="Thierry A."/>
            <person name="Vandenbol M."/>
            <person name="van der Aart Q.J.M."/>
            <person name="Van Dyck L."/>
            <person name="Vanoni M."/>
            <person name="Verhasselt P."/>
            <person name="Voet M."/>
            <person name="Volckaert G."/>
            <person name="Wambutt R."/>
            <person name="Watson M.D."/>
            <person name="Weber N."/>
            <person name="Wedler E."/>
            <person name="Wedler H."/>
            <person name="Wipfli P."/>
            <person name="Wolf K."/>
            <person name="Wright L.F."/>
            <person name="Zaccaria P."/>
            <person name="Zimmermann M."/>
            <person name="Zollner A."/>
            <person name="Kleine K."/>
        </authorList>
    </citation>
    <scope>NUCLEOTIDE SEQUENCE [LARGE SCALE GENOMIC DNA]</scope>
    <source>
        <strain>ATCC 204508 / S288c</strain>
    </source>
</reference>
<reference key="3">
    <citation type="journal article" date="2014" name="G3 (Bethesda)">
        <title>The reference genome sequence of Saccharomyces cerevisiae: Then and now.</title>
        <authorList>
            <person name="Engel S.R."/>
            <person name="Dietrich F.S."/>
            <person name="Fisk D.G."/>
            <person name="Binkley G."/>
            <person name="Balakrishnan R."/>
            <person name="Costanzo M.C."/>
            <person name="Dwight S.S."/>
            <person name="Hitz B.C."/>
            <person name="Karra K."/>
            <person name="Nash R.S."/>
            <person name="Weng S."/>
            <person name="Wong E.D."/>
            <person name="Lloyd P."/>
            <person name="Skrzypek M.S."/>
            <person name="Miyasato S.R."/>
            <person name="Simison M."/>
            <person name="Cherry J.M."/>
        </authorList>
    </citation>
    <scope>GENOME REANNOTATION</scope>
    <source>
        <strain>ATCC 204508 / S288c</strain>
    </source>
</reference>
<reference key="4">
    <citation type="journal article" date="2003" name="Nature">
        <title>Global analysis of protein localization in budding yeast.</title>
        <authorList>
            <person name="Huh W.-K."/>
            <person name="Falvo J.V."/>
            <person name="Gerke L.C."/>
            <person name="Carroll A.S."/>
            <person name="Howson R.W."/>
            <person name="Weissman J.S."/>
            <person name="O'Shea E.K."/>
        </authorList>
    </citation>
    <scope>SUBCELLULAR LOCATION [LARGE SCALE ANALYSIS]</scope>
</reference>
<reference key="5">
    <citation type="journal article" date="2017" name="Metab. Eng.">
        <title>Ethyl acetate production by the elusive alcohol acetyltransferase from yeast.</title>
        <authorList>
            <person name="Kruis A.J."/>
            <person name="Levisson M."/>
            <person name="Mars A.E."/>
            <person name="van der Ploeg M."/>
            <person name="Garces Daza F."/>
            <person name="Ellena V."/>
            <person name="Kengen S.W.M."/>
            <person name="van der Oost J."/>
            <person name="Weusthuis R.A."/>
        </authorList>
    </citation>
    <scope>FUNCTION</scope>
    <scope>CATALYTIC ACTIVITY</scope>
    <scope>DISRUPTION PHENOTYPE</scope>
    <source>
        <strain>CEN.PK2-1D</strain>
    </source>
</reference>
<evidence type="ECO:0000250" key="1">
    <source>
        <dbReference type="UniProtKB" id="A0A1E3P8S6"/>
    </source>
</evidence>
<evidence type="ECO:0000255" key="2"/>
<evidence type="ECO:0000269" key="3">
    <source>
    </source>
</evidence>
<evidence type="ECO:0000269" key="4">
    <source>
    </source>
</evidence>
<evidence type="ECO:0000303" key="5">
    <source>
    </source>
</evidence>
<evidence type="ECO:0000305" key="6"/>
<evidence type="ECO:0000305" key="7">
    <source>
    </source>
</evidence>
<evidence type="ECO:0000312" key="8">
    <source>
        <dbReference type="SGD" id="S000003247"/>
    </source>
</evidence>
<feature type="chain" id="PRO_0000202782" description="Ethanol acetyltransferase 1">
    <location>
        <begin position="1"/>
        <end position="328"/>
    </location>
</feature>
<feature type="domain" description="AB hydrolase-1" evidence="2">
    <location>
        <begin position="39"/>
        <end position="309"/>
    </location>
</feature>
<feature type="active site" description="Charge relay system" evidence="1">
    <location>
        <position position="115"/>
    </location>
</feature>
<feature type="active site" description="Charge relay system" evidence="1">
    <location>
        <position position="139"/>
    </location>
</feature>
<feature type="active site" description="Charge relay system" evidence="1">
    <location>
        <position position="302"/>
    </location>
</feature>
<gene>
    <name evidence="5" type="primary">EAT1</name>
    <name evidence="8" type="ordered locus">YGR015C</name>
</gene>
<protein>
    <recommendedName>
        <fullName>Ethanol acetyltransferase 1</fullName>
        <ecNumber evidence="4">2.3.1.268</ecNumber>
    </recommendedName>
    <alternativeName>
        <fullName>Acetyl-CoA hydrolase</fullName>
        <ecNumber>3.1.2.1</ecNumber>
    </alternativeName>
    <alternativeName>
        <fullName>Acetyl-CoA thioesterase</fullName>
    </alternativeName>
    <alternativeName>
        <fullName>Alcohol acetyltransferase</fullName>
        <shortName>AAT</shortName>
    </alternativeName>
    <alternativeName>
        <fullName>Ethyl acetate esterase</fullName>
        <ecNumber>3.1.1.-</ecNumber>
    </alternativeName>
</protein>